<accession>Q5Y4Y8</accession>
<keyword id="KW-0297">G-protein coupled receptor</keyword>
<keyword id="KW-0325">Glycoprotein</keyword>
<keyword id="KW-0472">Membrane</keyword>
<keyword id="KW-0675">Receptor</keyword>
<keyword id="KW-1185">Reference proteome</keyword>
<keyword id="KW-0716">Sensory transduction</keyword>
<keyword id="KW-0919">Taste</keyword>
<keyword id="KW-0807">Transducer</keyword>
<keyword id="KW-0812">Transmembrane</keyword>
<keyword id="KW-1133">Transmembrane helix</keyword>
<reference key="1">
    <citation type="journal article" date="2004" name="Proc. Natl. Acad. Sci. U.S.A.">
        <title>Divergence of T2R chemosensory receptor families in humans, bonobos, and chimpanzees.</title>
        <authorList>
            <person name="Parry C.M."/>
            <person name="Erkner A."/>
            <person name="le Coutre J."/>
        </authorList>
    </citation>
    <scope>NUCLEOTIDE SEQUENCE [GENOMIC DNA]</scope>
</reference>
<proteinExistence type="inferred from homology"/>
<protein>
    <recommendedName>
        <fullName>Taste receptor type 2 member 66</fullName>
        <shortName>T2R66</shortName>
    </recommendedName>
</protein>
<comment type="function">
    <text evidence="1">Receptor that may play a role in the perception of bitterness and is gustducin-linked. May play a role in sensing the chemical composition of the gastrointestinal content. The activity of this receptor may stimulate alpha gustducin, mediate PLC-beta-2 activation and lead to the gating of TRPM5 (By similarity).</text>
</comment>
<comment type="subcellular location">
    <subcellularLocation>
        <location>Membrane</location>
        <topology>Multi-pass membrane protein</topology>
    </subcellularLocation>
</comment>
<comment type="miscellaneous">
    <text>Most taste cells may be activated by a limited number of bitter compounds; individual taste cells can discriminate among bitter stimuli.</text>
</comment>
<comment type="miscellaneous">
    <text>The human orthologous protein does not exist.</text>
</comment>
<comment type="similarity">
    <text evidence="3">Belongs to the G-protein coupled receptor T2R family.</text>
</comment>
<evidence type="ECO:0000250" key="1"/>
<evidence type="ECO:0000255" key="2"/>
<evidence type="ECO:0000305" key="3"/>
<gene>
    <name type="primary">TAS2R66</name>
</gene>
<name>T2R66_PANPA</name>
<sequence>MITFLPIIFSILIVVTFVIGNFANGFIALANSIEWFKRQKISFADQILTALAVPRVGLLWVLLLNWYATELNPAFYSIEVRITAYNLWAVINHFSNWLATSLSIFYLLKIANFSNLIFLRLKRRVKSVVLVILLGPLLFLVCHLFVINMNQIIWTKEYEGNMTWKIKLRSAMYLSNTTVTILANLVPFTVTLISFLLLVCSLCKHLKKMQLHGKGSQDPSTKVHIKALQTVISFLLLCAIYFVSVIISVWSFKNLENKPVFMFCQAIGFSCSSAHPFILIWGNKKLKQPFLSVLWQMRYWVKGEKPSSS</sequence>
<organism>
    <name type="scientific">Pan paniscus</name>
    <name type="common">Pygmy chimpanzee</name>
    <name type="synonym">Bonobo</name>
    <dbReference type="NCBI Taxonomy" id="9597"/>
    <lineage>
        <taxon>Eukaryota</taxon>
        <taxon>Metazoa</taxon>
        <taxon>Chordata</taxon>
        <taxon>Craniata</taxon>
        <taxon>Vertebrata</taxon>
        <taxon>Euteleostomi</taxon>
        <taxon>Mammalia</taxon>
        <taxon>Eutheria</taxon>
        <taxon>Euarchontoglires</taxon>
        <taxon>Primates</taxon>
        <taxon>Haplorrhini</taxon>
        <taxon>Catarrhini</taxon>
        <taxon>Hominidae</taxon>
        <taxon>Pan</taxon>
    </lineage>
</organism>
<feature type="chain" id="PRO_0000082358" description="Taste receptor type 2 member 66">
    <location>
        <begin position="1"/>
        <end position="309"/>
    </location>
</feature>
<feature type="topological domain" description="Extracellular" evidence="2">
    <location>
        <position position="1"/>
    </location>
</feature>
<feature type="transmembrane region" description="Helical; Name=1" evidence="2">
    <location>
        <begin position="2"/>
        <end position="22"/>
    </location>
</feature>
<feature type="topological domain" description="Cytoplasmic" evidence="2">
    <location>
        <begin position="23"/>
        <end position="46"/>
    </location>
</feature>
<feature type="transmembrane region" description="Helical; Name=2" evidence="2">
    <location>
        <begin position="47"/>
        <end position="67"/>
    </location>
</feature>
<feature type="topological domain" description="Extracellular" evidence="2">
    <location>
        <begin position="68"/>
        <end position="86"/>
    </location>
</feature>
<feature type="transmembrane region" description="Helical; Name=3" evidence="2">
    <location>
        <begin position="87"/>
        <end position="107"/>
    </location>
</feature>
<feature type="topological domain" description="Cytoplasmic" evidence="2">
    <location>
        <begin position="108"/>
        <end position="126"/>
    </location>
</feature>
<feature type="transmembrane region" description="Helical; Name=4" evidence="2">
    <location>
        <begin position="127"/>
        <end position="147"/>
    </location>
</feature>
<feature type="topological domain" description="Extracellular" evidence="2">
    <location>
        <begin position="148"/>
        <end position="178"/>
    </location>
</feature>
<feature type="transmembrane region" description="Helical; Name=5" evidence="2">
    <location>
        <begin position="179"/>
        <end position="199"/>
    </location>
</feature>
<feature type="topological domain" description="Cytoplasmic" evidence="2">
    <location>
        <begin position="200"/>
        <end position="229"/>
    </location>
</feature>
<feature type="transmembrane region" description="Helical; Name=6" evidence="2">
    <location>
        <begin position="230"/>
        <end position="250"/>
    </location>
</feature>
<feature type="topological domain" description="Extracellular" evidence="2">
    <location>
        <begin position="251"/>
        <end position="259"/>
    </location>
</feature>
<feature type="transmembrane region" description="Helical; Name=7" evidence="2">
    <location>
        <begin position="260"/>
        <end position="280"/>
    </location>
</feature>
<feature type="topological domain" description="Cytoplasmic" evidence="2">
    <location>
        <begin position="281"/>
        <end position="309"/>
    </location>
</feature>
<feature type="glycosylation site" description="N-linked (GlcNAc...) asparagine" evidence="2">
    <location>
        <position position="161"/>
    </location>
</feature>
<feature type="glycosylation site" description="N-linked (GlcNAc...) asparagine" evidence="2">
    <location>
        <position position="176"/>
    </location>
</feature>
<dbReference type="EMBL" id="AY677161">
    <property type="protein sequence ID" value="AAV28587.1"/>
    <property type="molecule type" value="Genomic_DNA"/>
</dbReference>
<dbReference type="SMR" id="Q5Y4Y8"/>
<dbReference type="GlyCosmos" id="Q5Y4Y8">
    <property type="glycosylation" value="2 sites, No reported glycans"/>
</dbReference>
<dbReference type="Proteomes" id="UP000240080">
    <property type="component" value="Unplaced"/>
</dbReference>
<dbReference type="GO" id="GO:0005886">
    <property type="term" value="C:plasma membrane"/>
    <property type="evidence" value="ECO:0007669"/>
    <property type="project" value="UniProtKB-ARBA"/>
</dbReference>
<dbReference type="GO" id="GO:0033038">
    <property type="term" value="F:bitter taste receptor activity"/>
    <property type="evidence" value="ECO:0007669"/>
    <property type="project" value="InterPro"/>
</dbReference>
<dbReference type="GO" id="GO:0004930">
    <property type="term" value="F:G protein-coupled receptor activity"/>
    <property type="evidence" value="ECO:0007669"/>
    <property type="project" value="UniProtKB-KW"/>
</dbReference>
<dbReference type="CDD" id="cd15027">
    <property type="entry name" value="7tm_TAS2R43-like"/>
    <property type="match status" value="1"/>
</dbReference>
<dbReference type="FunFam" id="1.20.1070.10:FF:000042">
    <property type="entry name" value="Taste receptor type 2 member 7"/>
    <property type="match status" value="1"/>
</dbReference>
<dbReference type="Gene3D" id="1.20.1070.10">
    <property type="entry name" value="Rhodopsin 7-helix transmembrane proteins"/>
    <property type="match status" value="1"/>
</dbReference>
<dbReference type="InterPro" id="IPR007960">
    <property type="entry name" value="TAS2R"/>
</dbReference>
<dbReference type="PANTHER" id="PTHR11394">
    <property type="entry name" value="TASTE RECEPTOR TYPE 2"/>
    <property type="match status" value="1"/>
</dbReference>
<dbReference type="PANTHER" id="PTHR11394:SF66">
    <property type="entry name" value="TASTE RECEPTOR TYPE 2 MEMBER 46"/>
    <property type="match status" value="1"/>
</dbReference>
<dbReference type="Pfam" id="PF05296">
    <property type="entry name" value="TAS2R"/>
    <property type="match status" value="1"/>
</dbReference>
<dbReference type="SUPFAM" id="SSF81321">
    <property type="entry name" value="Family A G protein-coupled receptor-like"/>
    <property type="match status" value="1"/>
</dbReference>